<proteinExistence type="evidence at protein level"/>
<organism>
    <name type="scientific">Escherichia coli</name>
    <dbReference type="NCBI Taxonomy" id="562"/>
    <lineage>
        <taxon>Bacteria</taxon>
        <taxon>Pseudomonadati</taxon>
        <taxon>Pseudomonadota</taxon>
        <taxon>Gammaproteobacteria</taxon>
        <taxon>Enterobacterales</taxon>
        <taxon>Enterobacteriaceae</taxon>
        <taxon>Escherichia</taxon>
    </lineage>
</organism>
<reference key="1">
    <citation type="journal article" date="1985" name="J. Bacteriol.">
        <title>Nucleotide sequence of an Escherichia coli chromosomal hemolysin.</title>
        <authorList>
            <person name="Felmlee T."/>
            <person name="Pellett S."/>
            <person name="Welch R.A."/>
        </authorList>
    </citation>
    <scope>NUCLEOTIDE SEQUENCE [GENOMIC DNA]</scope>
    <source>
        <strain>J96 / Serotype O4</strain>
    </source>
</reference>
<reference key="2">
    <citation type="journal article" date="1992" name="Mol. Gen. Genet.">
        <title>A topological model for the haemolysin translocator protein HlyD.</title>
        <authorList>
            <person name="Schuelein R."/>
            <person name="Gentschev I."/>
            <person name="Mollenkopf H.-J."/>
            <person name="Goebel W."/>
        </authorList>
    </citation>
    <scope>TOPOLOGY</scope>
</reference>
<gene>
    <name type="primary">hlyD</name>
</gene>
<name>HLYDC_ECOLX</name>
<keyword id="KW-0002">3D-structure</keyword>
<keyword id="KW-0997">Cell inner membrane</keyword>
<keyword id="KW-1003">Cell membrane</keyword>
<keyword id="KW-0204">Cytolysis</keyword>
<keyword id="KW-0354">Hemolysis</keyword>
<keyword id="KW-0472">Membrane</keyword>
<keyword id="KW-0735">Signal-anchor</keyword>
<keyword id="KW-0812">Transmembrane</keyword>
<keyword id="KW-1133">Transmembrane helix</keyword>
<keyword id="KW-0813">Transport</keyword>
<comment type="function">
    <text>Involved in the transport of hemolysin A.</text>
</comment>
<comment type="subcellular location">
    <subcellularLocation>
        <location>Cell inner membrane</location>
        <topology>Single-pass type II membrane protein</topology>
    </subcellularLocation>
</comment>
<comment type="similarity">
    <text evidence="1">Belongs to the membrane fusion protein (MFP) (TC 8.A.1) family.</text>
</comment>
<protein>
    <recommendedName>
        <fullName>Hemolysin secretion protein D, chromosomal</fullName>
    </recommendedName>
</protein>
<sequence length="478" mass="54591">MKTWLMGFSEFLLRYKLVWSETWKIRKQLDTPVREKDENEFLPAHLELIETPVSRRPRLVAYFIMGFLVIAFILSVLGQVEIVATANGKLTLSGRSKEIKPIENSIVKEIIVKEGESVRKGDVLLKLTALGAEADTLKTQSSLLQARLEQIRYQILSRSIELNKLPELKLPDEPYFQNVSEEEVLRLTSLIKEQFSTWQNQKYQKELNLDKKRAERLTILARINRYENVSRVEKSRLDDFRSLLHKQAIAKHAVLEQENKYVEAANELRVYKSQLEQIESEILSAKEEYQLVTQLFKNEILDKLRQTTDSIELLTLELEKNEERQQASVIRAPVSGKVQQLKVHTEGGVVTTAETLMVIVPEDDTLEVTALVQNKDIGFINVGQNAIIKVEAFPYTRYGYLVGKVKNINLDAIEDQKLGLVFNVIVSVEENDLSTGNKHIPLSSGMAVTAEIKTGMRSVISYLLSPLEESVTESLHER</sequence>
<dbReference type="EMBL" id="M10133">
    <property type="protein sequence ID" value="AAA23977.1"/>
    <property type="molecule type" value="Genomic_DNA"/>
</dbReference>
<dbReference type="PIR" id="D24433">
    <property type="entry name" value="LEECD"/>
</dbReference>
<dbReference type="RefSeq" id="WP_001528401.1">
    <property type="nucleotide sequence ID" value="NZ_VOTV01000033.1"/>
</dbReference>
<dbReference type="PDB" id="5C21">
    <property type="method" value="X-ray"/>
    <property type="resolution" value="2.50 A"/>
    <property type="chains" value="A/B=96-372"/>
</dbReference>
<dbReference type="PDB" id="5C22">
    <property type="method" value="X-ray"/>
    <property type="resolution" value="2.30 A"/>
    <property type="chains" value="A/B/C/D=96-372"/>
</dbReference>
<dbReference type="PDBsum" id="5C21"/>
<dbReference type="PDBsum" id="5C22"/>
<dbReference type="EMDB" id="EMD-25116"/>
<dbReference type="SMR" id="P09986"/>
<dbReference type="DIP" id="DIP-16930N"/>
<dbReference type="EvolutionaryTrace" id="P09986"/>
<dbReference type="GO" id="GO:0005886">
    <property type="term" value="C:plasma membrane"/>
    <property type="evidence" value="ECO:0007669"/>
    <property type="project" value="UniProtKB-SubCell"/>
</dbReference>
<dbReference type="GO" id="GO:0031640">
    <property type="term" value="P:killing of cells of another organism"/>
    <property type="evidence" value="ECO:0007669"/>
    <property type="project" value="UniProtKB-KW"/>
</dbReference>
<dbReference type="GO" id="GO:0030253">
    <property type="term" value="P:protein secretion by the type I secretion system"/>
    <property type="evidence" value="ECO:0000314"/>
    <property type="project" value="UniProtKB"/>
</dbReference>
<dbReference type="Gene3D" id="2.40.30.170">
    <property type="match status" value="1"/>
</dbReference>
<dbReference type="InterPro" id="IPR050739">
    <property type="entry name" value="MFP"/>
</dbReference>
<dbReference type="InterPro" id="IPR006144">
    <property type="entry name" value="Secretion_HlyD_CS"/>
</dbReference>
<dbReference type="InterPro" id="IPR010129">
    <property type="entry name" value="T1SS_HlyD"/>
</dbReference>
<dbReference type="NCBIfam" id="TIGR01843">
    <property type="entry name" value="type_I_hlyD"/>
    <property type="match status" value="1"/>
</dbReference>
<dbReference type="PANTHER" id="PTHR30386:SF27">
    <property type="entry name" value="MEMBRANE FUSION PROTEIN (MFP) FAMILY PROTEIN"/>
    <property type="match status" value="1"/>
</dbReference>
<dbReference type="PANTHER" id="PTHR30386">
    <property type="entry name" value="MEMBRANE FUSION SUBUNIT OF EMRAB-TOLC MULTIDRUG EFFLUX PUMP"/>
    <property type="match status" value="1"/>
</dbReference>
<dbReference type="Pfam" id="PF13437">
    <property type="entry name" value="HlyD_3"/>
    <property type="match status" value="1"/>
</dbReference>
<dbReference type="PRINTS" id="PR01490">
    <property type="entry name" value="RTXTOXIND"/>
</dbReference>
<dbReference type="SUPFAM" id="SSF111369">
    <property type="entry name" value="HlyD-like secretion proteins"/>
    <property type="match status" value="2"/>
</dbReference>
<dbReference type="PROSITE" id="PS00543">
    <property type="entry name" value="HLYD_FAMILY"/>
    <property type="match status" value="1"/>
</dbReference>
<feature type="chain" id="PRO_0000201873" description="Hemolysin secretion protein D, chromosomal">
    <location>
        <begin position="1"/>
        <end position="478"/>
    </location>
</feature>
<feature type="topological domain" description="Cytoplasmic" evidence="2">
    <location>
        <begin position="1"/>
        <end position="59"/>
    </location>
</feature>
<feature type="transmembrane region" description="Helical; Signal-anchor for type II membrane protein" evidence="1">
    <location>
        <begin position="60"/>
        <end position="80"/>
    </location>
</feature>
<feature type="topological domain" description="Periplasmic" evidence="2">
    <location>
        <begin position="81"/>
        <end position="478"/>
    </location>
</feature>
<feature type="strand" evidence="4">
    <location>
        <begin position="97"/>
        <end position="99"/>
    </location>
</feature>
<feature type="strand" evidence="4">
    <location>
        <begin position="102"/>
        <end position="110"/>
    </location>
</feature>
<feature type="strand" evidence="4">
    <location>
        <begin position="123"/>
        <end position="129"/>
    </location>
</feature>
<feature type="helix" evidence="4">
    <location>
        <begin position="132"/>
        <end position="162"/>
    </location>
</feature>
<feature type="helix" evidence="4">
    <location>
        <begin position="174"/>
        <end position="176"/>
    </location>
</feature>
<feature type="helix" evidence="4">
    <location>
        <begin position="181"/>
        <end position="241"/>
    </location>
</feature>
<feature type="turn" evidence="4">
    <location>
        <begin position="244"/>
        <end position="247"/>
    </location>
</feature>
<feature type="helix" evidence="4">
    <location>
        <begin position="251"/>
        <end position="325"/>
    </location>
</feature>
<feature type="strand" evidence="4">
    <location>
        <begin position="328"/>
        <end position="331"/>
    </location>
</feature>
<feature type="strand" evidence="4">
    <location>
        <begin position="336"/>
        <end position="340"/>
    </location>
</feature>
<feature type="strand" evidence="3">
    <location>
        <begin position="348"/>
        <end position="350"/>
    </location>
</feature>
<feature type="strand" evidence="4">
    <location>
        <begin position="357"/>
        <end position="360"/>
    </location>
</feature>
<evidence type="ECO:0000305" key="1"/>
<evidence type="ECO:0000305" key="2">
    <source>
    </source>
</evidence>
<evidence type="ECO:0007829" key="3">
    <source>
        <dbReference type="PDB" id="5C21"/>
    </source>
</evidence>
<evidence type="ECO:0007829" key="4">
    <source>
        <dbReference type="PDB" id="5C22"/>
    </source>
</evidence>
<accession>P09986</accession>